<organism>
    <name type="scientific">Mus musculus</name>
    <name type="common">Mouse</name>
    <dbReference type="NCBI Taxonomy" id="10090"/>
    <lineage>
        <taxon>Eukaryota</taxon>
        <taxon>Metazoa</taxon>
        <taxon>Chordata</taxon>
        <taxon>Craniata</taxon>
        <taxon>Vertebrata</taxon>
        <taxon>Euteleostomi</taxon>
        <taxon>Mammalia</taxon>
        <taxon>Eutheria</taxon>
        <taxon>Euarchontoglires</taxon>
        <taxon>Glires</taxon>
        <taxon>Rodentia</taxon>
        <taxon>Myomorpha</taxon>
        <taxon>Muroidea</taxon>
        <taxon>Muridae</taxon>
        <taxon>Murinae</taxon>
        <taxon>Mus</taxon>
        <taxon>Mus</taxon>
    </lineage>
</organism>
<feature type="signal peptide" evidence="3">
    <location>
        <begin position="1"/>
        <end position="32"/>
    </location>
</feature>
<feature type="chain" id="PRO_0000011045" description="Interleukin-15 receptor subunit alpha">
    <location>
        <begin position="33"/>
        <end position="263"/>
    </location>
</feature>
<feature type="chain" id="PRO_0000333856" description="Soluble interleukin-15 receptor subunit alpha">
    <location>
        <begin position="33"/>
        <end status="unknown"/>
    </location>
</feature>
<feature type="topological domain" description="Extracellular" evidence="3">
    <location>
        <begin position="33"/>
        <end position="205"/>
    </location>
</feature>
<feature type="transmembrane region" description="Helical" evidence="3">
    <location>
        <begin position="206"/>
        <end position="226"/>
    </location>
</feature>
<feature type="topological domain" description="Cytoplasmic" evidence="3">
    <location>
        <begin position="227"/>
        <end position="263"/>
    </location>
</feature>
<feature type="domain" description="Sushi" evidence="4">
    <location>
        <begin position="34"/>
        <end position="98"/>
    </location>
</feature>
<feature type="region of interest" description="Disordered" evidence="5">
    <location>
        <begin position="113"/>
        <end position="178"/>
    </location>
</feature>
<feature type="compositionally biased region" description="Low complexity" evidence="5">
    <location>
        <begin position="113"/>
        <end position="135"/>
    </location>
</feature>
<feature type="compositionally biased region" description="Polar residues" evidence="5">
    <location>
        <begin position="136"/>
        <end position="145"/>
    </location>
</feature>
<feature type="compositionally biased region" description="Low complexity" evidence="5">
    <location>
        <begin position="154"/>
        <end position="169"/>
    </location>
</feature>
<feature type="glycosylation site" description="N-linked (GlcNAc...) asparagine" evidence="3">
    <location>
        <position position="51"/>
    </location>
</feature>
<feature type="disulfide bond" evidence="4 8">
    <location>
        <begin position="36"/>
        <end position="78"/>
    </location>
</feature>
<feature type="disulfide bond" evidence="4 8">
    <location>
        <begin position="62"/>
        <end position="96"/>
    </location>
</feature>
<feature type="splice variant" id="VSP_012627" description="In isoform 5." evidence="10 11">
    <location>
        <begin position="1"/>
        <end position="97"/>
    </location>
</feature>
<feature type="splice variant" id="VSP_012628" description="In isoform 4, isoform 5 and isoform 6." evidence="10 11">
    <location>
        <begin position="98"/>
        <end position="128"/>
    </location>
</feature>
<feature type="splice variant" id="VSP_012629" description="In isoform 2, isoform 3, isoform 4, isoform 5 and isoform 6." evidence="10 11">
    <location>
        <begin position="129"/>
        <end position="140"/>
    </location>
</feature>
<feature type="splice variant" id="VSP_012630" description="In isoform 2, isoform 3, isoform 4 and isoform 6." evidence="10">
    <location>
        <begin position="141"/>
        <end position="161"/>
    </location>
</feature>
<feature type="splice variant" id="VSP_012631" description="In isoform 3, isoform 4 and isoform 6." evidence="10">
    <location>
        <begin position="162"/>
        <end position="194"/>
    </location>
</feature>
<feature type="splice variant" id="VSP_012633" description="In isoform 6." evidence="12">
    <original>EISPHSSKMTKV</original>
    <variation>M</variation>
    <location>
        <begin position="195"/>
        <end position="206"/>
    </location>
</feature>
<feature type="splice variant" id="VSP_012632" description="In isoform 4." evidence="10">
    <original>E</original>
    <variation>K</variation>
    <location>
        <position position="195"/>
    </location>
</feature>
<feature type="strand" evidence="14">
    <location>
        <begin position="57"/>
        <end position="59"/>
    </location>
</feature>
<feature type="strand" evidence="14">
    <location>
        <begin position="66"/>
        <end position="68"/>
    </location>
</feature>
<feature type="strand" evidence="14">
    <location>
        <begin position="75"/>
        <end position="80"/>
    </location>
</feature>
<feature type="turn" evidence="14">
    <location>
        <begin position="82"/>
        <end position="84"/>
    </location>
</feature>
<feature type="strand" evidence="14">
    <location>
        <begin position="87"/>
        <end position="89"/>
    </location>
</feature>
<feature type="strand" evidence="14">
    <location>
        <begin position="96"/>
        <end position="98"/>
    </location>
</feature>
<name>I15RA_MOUSE</name>
<evidence type="ECO:0000250" key="1"/>
<evidence type="ECO:0000250" key="2">
    <source>
        <dbReference type="UniProtKB" id="Q13261"/>
    </source>
</evidence>
<evidence type="ECO:0000255" key="3"/>
<evidence type="ECO:0000255" key="4">
    <source>
        <dbReference type="PROSITE-ProRule" id="PRU00302"/>
    </source>
</evidence>
<evidence type="ECO:0000256" key="5">
    <source>
        <dbReference type="SAM" id="MobiDB-lite"/>
    </source>
</evidence>
<evidence type="ECO:0000269" key="6">
    <source>
    </source>
</evidence>
<evidence type="ECO:0000269" key="7">
    <source>
    </source>
</evidence>
<evidence type="ECO:0000269" key="8">
    <source>
    </source>
</evidence>
<evidence type="ECO:0000269" key="9">
    <source>
    </source>
</evidence>
<evidence type="ECO:0000303" key="10">
    <source>
    </source>
</evidence>
<evidence type="ECO:0000303" key="11">
    <source>
    </source>
</evidence>
<evidence type="ECO:0000305" key="12"/>
<evidence type="ECO:0000305" key="13">
    <source>
    </source>
</evidence>
<evidence type="ECO:0007829" key="14">
    <source>
        <dbReference type="PDB" id="2PSM"/>
    </source>
</evidence>
<accession>Q60819</accession>
<accession>A2AP35</accession>
<accession>A2AP36</accession>
<accession>A2AP37</accession>
<accession>Q80Z90</accession>
<accession>Q80Z91</accession>
<accession>Q80Z92</accession>
<accession>Q8R5E4</accession>
<proteinExistence type="evidence at protein level"/>
<keyword id="KW-0002">3D-structure</keyword>
<keyword id="KW-0025">Alternative splicing</keyword>
<keyword id="KW-1015">Disulfide bond</keyword>
<keyword id="KW-0325">Glycoprotein</keyword>
<keyword id="KW-0472">Membrane</keyword>
<keyword id="KW-0539">Nucleus</keyword>
<keyword id="KW-0597">Phosphoprotein</keyword>
<keyword id="KW-0675">Receptor</keyword>
<keyword id="KW-1185">Reference proteome</keyword>
<keyword id="KW-0964">Secreted</keyword>
<keyword id="KW-0732">Signal</keyword>
<keyword id="KW-0768">Sushi</keyword>
<keyword id="KW-0812">Transmembrane</keyword>
<keyword id="KW-1133">Transmembrane helix</keyword>
<reference key="1">
    <citation type="journal article" date="1995" name="EMBO J.">
        <title>Identification and cloning of a novel IL-15 binding protein that is structurally related to the alpha chain of the IL-2 receptor.</title>
        <authorList>
            <person name="Giri J.G."/>
            <person name="Kumaki S."/>
            <person name="Ahdieh M."/>
            <person name="Friend D.J."/>
            <person name="Loomis A."/>
            <person name="Shanebeck K."/>
            <person name="DuBose R."/>
            <person name="Cosman D."/>
            <person name="Park L.S."/>
            <person name="Anderson D.M."/>
        </authorList>
    </citation>
    <scope>NUCLEOTIDE SEQUENCE [MRNA] (ISOFORM 1)</scope>
    <scope>LIGAND-BINDING</scope>
    <scope>SUBUNIT</scope>
    <scope>TISSUE SPECIFICITY</scope>
</reference>
<reference key="2">
    <citation type="journal article" date="2003" name="J. Leukoc. Biol.">
        <title>Cytokine requirements for the growth and development of mouse NK cells in vitro.</title>
        <authorList>
            <person name="Toomey J.A."/>
            <person name="Gays F."/>
            <person name="Foster D."/>
            <person name="Brooks C.G."/>
        </authorList>
    </citation>
    <scope>NUCLEOTIDE SEQUENCE [MRNA] (ISOFORMS 2; 3; 4 AND 5)</scope>
    <scope>TISSUE SPECIFICITY</scope>
    <source>
        <strain>C57BL/6J</strain>
    </source>
</reference>
<reference key="3">
    <citation type="journal article" date="2009" name="PLoS Biol.">
        <title>Lineage-specific biology revealed by a finished genome assembly of the mouse.</title>
        <authorList>
            <person name="Church D.M."/>
            <person name="Goodstadt L."/>
            <person name="Hillier L.W."/>
            <person name="Zody M.C."/>
            <person name="Goldstein S."/>
            <person name="She X."/>
            <person name="Bult C.J."/>
            <person name="Agarwala R."/>
            <person name="Cherry J.L."/>
            <person name="DiCuccio M."/>
            <person name="Hlavina W."/>
            <person name="Kapustin Y."/>
            <person name="Meric P."/>
            <person name="Maglott D."/>
            <person name="Birtle Z."/>
            <person name="Marques A.C."/>
            <person name="Graves T."/>
            <person name="Zhou S."/>
            <person name="Teague B."/>
            <person name="Potamousis K."/>
            <person name="Churas C."/>
            <person name="Place M."/>
            <person name="Herschleb J."/>
            <person name="Runnheim R."/>
            <person name="Forrest D."/>
            <person name="Amos-Landgraf J."/>
            <person name="Schwartz D.C."/>
            <person name="Cheng Z."/>
            <person name="Lindblad-Toh K."/>
            <person name="Eichler E.E."/>
            <person name="Ponting C.P."/>
        </authorList>
    </citation>
    <scope>NUCLEOTIDE SEQUENCE [LARGE SCALE GENOMIC DNA]</scope>
    <source>
        <strain>C57BL/6J</strain>
    </source>
</reference>
<reference key="4">
    <citation type="journal article" date="2004" name="Genome Res.">
        <title>The status, quality, and expansion of the NIH full-length cDNA project: the Mammalian Gene Collection (MGC).</title>
        <authorList>
            <consortium name="The MGC Project Team"/>
        </authorList>
    </citation>
    <scope>NUCLEOTIDE SEQUENCE [LARGE SCALE MRNA] (ISOFORM 5)</scope>
    <source>
        <strain>FVB/N</strain>
        <tissue>Mammary tumor</tissue>
    </source>
</reference>
<reference key="5">
    <citation type="journal article" date="2003" name="J. Immunol.">
        <title>Mast cells express novel functional IL-15 receptor alpha isoforms.</title>
        <authorList>
            <person name="Bulanova E."/>
            <person name="Budagian V."/>
            <person name="Orinska Z."/>
            <person name="Krause H."/>
            <person name="Paus R."/>
            <person name="Bulfone-Paus S."/>
        </authorList>
    </citation>
    <scope>RETRACTED PAPER</scope>
</reference>
<reference key="6">
    <citation type="journal article" date="2011" name="J. Immunol.">
        <title>Mast cells express novel functional IL-15 receptor alpha isoforms.</title>
        <authorList>
            <person name="Krause H."/>
            <person name="Paus R."/>
            <person name="Orinska Z."/>
            <person name="Bulfone-Paus S."/>
        </authorList>
    </citation>
    <scope>RETRACTION NOTICE OF PUBMED:12734349</scope>
</reference>
<reference key="7">
    <citation type="journal article" date="2004" name="J. Biol. Chem.">
        <title>Natural soluble interleukin-15Ralpha is generated by cleavage that involves the tumor necrosis factor-alpha-converting enzyme (TACE/ADAM17).</title>
        <authorList>
            <person name="Budagian V."/>
            <person name="Bulanova E."/>
            <person name="Orinska Z."/>
            <person name="Ludwig A."/>
            <person name="Rose-John S."/>
            <person name="Saftig P."/>
            <person name="Borden E.C."/>
            <person name="Bulfone-Paus S."/>
        </authorList>
    </citation>
    <scope>RETRACTED PAPER</scope>
</reference>
<reference key="8">
    <citation type="journal article" date="2011" name="J. Biol. Chem.">
        <title>Natural soluble interleukin-15Ralpha is generated by cleavage that involves the tumor necrosis factor-alpha-converting enzyme (TACE/ADAM17).</title>
        <authorList>
            <person name="Budagian V."/>
            <person name="Bulanova E."/>
            <person name="Orinska Z."/>
            <person name="Ludwig A."/>
            <person name="Rose-John S."/>
            <person name="Saftig P."/>
            <person name="Borden E.C."/>
            <person name="Bulfone-Paus S."/>
        </authorList>
    </citation>
    <scope>RETRACTION NOTICE OF PUBMED:15215246</scope>
</reference>
<reference key="9">
    <citation type="journal article" date="2007" name="J. Biol. Chem.">
        <title>Crystal Structure of the interleukin-15.interleukin-15 receptor alpha complex: insights into trans and cis presentation.</title>
        <authorList>
            <person name="Olsen S.K."/>
            <person name="Ota N."/>
            <person name="Kishishita S."/>
            <person name="Kukimoto-Niino M."/>
            <person name="Murayama K."/>
            <person name="Uchiyama H."/>
            <person name="Toyama M."/>
            <person name="Terada T."/>
            <person name="Shirouzu M."/>
            <person name="Kanagawa O."/>
            <person name="Yokoyama S."/>
        </authorList>
    </citation>
    <scope>X-RAY CRYSTALLOGRAPHY (2.19 ANGSTROMS) OF 33-103 IN COMPLEX WITH IL15</scope>
    <scope>FUNCTION</scope>
    <scope>DISULFIDE BONDS</scope>
</reference>
<dbReference type="EMBL" id="U22339">
    <property type="protein sequence ID" value="AAC52240.1"/>
    <property type="molecule type" value="Genomic_DNA"/>
</dbReference>
<dbReference type="EMBL" id="AY219715">
    <property type="protein sequence ID" value="AAO62310.1"/>
    <property type="molecule type" value="mRNA"/>
</dbReference>
<dbReference type="EMBL" id="AY219716">
    <property type="protein sequence ID" value="AAO62311.1"/>
    <property type="molecule type" value="mRNA"/>
</dbReference>
<dbReference type="EMBL" id="AY219717">
    <property type="protein sequence ID" value="AAO62312.1"/>
    <property type="molecule type" value="mRNA"/>
</dbReference>
<dbReference type="EMBL" id="AY221616">
    <property type="protein sequence ID" value="AAO74882.1"/>
    <property type="molecule type" value="mRNA"/>
</dbReference>
<dbReference type="EMBL" id="AL831794">
    <property type="status" value="NOT_ANNOTATED_CDS"/>
    <property type="molecule type" value="Genomic_DNA"/>
</dbReference>
<dbReference type="EMBL" id="BC022705">
    <property type="protein sequence ID" value="AAH22705.1"/>
    <property type="molecule type" value="mRNA"/>
</dbReference>
<dbReference type="CCDS" id="CCDS15686.1">
    <molecule id="Q60819-1"/>
</dbReference>
<dbReference type="CCDS" id="CCDS15687.1">
    <molecule id="Q60819-5"/>
</dbReference>
<dbReference type="CCDS" id="CCDS70977.1">
    <molecule id="Q60819-2"/>
</dbReference>
<dbReference type="CCDS" id="CCDS70978.1">
    <molecule id="Q60819-3"/>
</dbReference>
<dbReference type="CCDS" id="CCDS70979.1">
    <molecule id="Q60819-4"/>
</dbReference>
<dbReference type="PIR" id="S57346">
    <property type="entry name" value="S57346"/>
</dbReference>
<dbReference type="RefSeq" id="NP_001258426.1">
    <molecule id="Q60819-5"/>
    <property type="nucleotide sequence ID" value="NM_001271497.2"/>
</dbReference>
<dbReference type="RefSeq" id="NP_001258428.1">
    <molecule id="Q60819-2"/>
    <property type="nucleotide sequence ID" value="NM_001271499.2"/>
</dbReference>
<dbReference type="RefSeq" id="NP_001258429.1">
    <molecule id="Q60819-3"/>
    <property type="nucleotide sequence ID" value="NM_001271500.2"/>
</dbReference>
<dbReference type="RefSeq" id="NP_001258430.1">
    <molecule id="Q60819-4"/>
    <property type="nucleotide sequence ID" value="NM_001271501.2"/>
</dbReference>
<dbReference type="RefSeq" id="NP_001407239.1">
    <molecule id="Q60819-5"/>
    <property type="nucleotide sequence ID" value="NM_001420310.1"/>
</dbReference>
<dbReference type="RefSeq" id="NP_001407240.1">
    <molecule id="Q60819-5"/>
    <property type="nucleotide sequence ID" value="NM_001420311.1"/>
</dbReference>
<dbReference type="RefSeq" id="NP_032384.1">
    <molecule id="Q60819-1"/>
    <property type="nucleotide sequence ID" value="NM_008358.3"/>
</dbReference>
<dbReference type="RefSeq" id="NP_598597.1">
    <molecule id="Q60819-5"/>
    <property type="nucleotide sequence ID" value="NM_133836.3"/>
</dbReference>
<dbReference type="RefSeq" id="XP_006497427.1">
    <property type="nucleotide sequence ID" value="XM_006497364.1"/>
</dbReference>
<dbReference type="RefSeq" id="XP_017171184.1">
    <molecule id="Q60819-6"/>
    <property type="nucleotide sequence ID" value="XM_017315695.3"/>
</dbReference>
<dbReference type="RefSeq" id="XP_030103504.1">
    <molecule id="Q60819-5"/>
    <property type="nucleotide sequence ID" value="XM_030247644.2"/>
</dbReference>
<dbReference type="PDB" id="2PSM">
    <property type="method" value="X-ray"/>
    <property type="resolution" value="2.19 A"/>
    <property type="chains" value="C/F=33-103"/>
</dbReference>
<dbReference type="PDBsum" id="2PSM"/>
<dbReference type="SMR" id="Q60819"/>
<dbReference type="CORUM" id="Q60819"/>
<dbReference type="FunCoup" id="Q60819">
    <property type="interactions" value="599"/>
</dbReference>
<dbReference type="STRING" id="10090.ENSMUSP00000077878"/>
<dbReference type="GlyCosmos" id="Q60819">
    <property type="glycosylation" value="1 site, No reported glycans"/>
</dbReference>
<dbReference type="GlyGen" id="Q60819">
    <property type="glycosylation" value="2 sites"/>
</dbReference>
<dbReference type="PaxDb" id="10090-ENSMUSP00000077878"/>
<dbReference type="ProteomicsDB" id="273244">
    <molecule id="Q60819-1"/>
</dbReference>
<dbReference type="ProteomicsDB" id="273245">
    <molecule id="Q60819-2"/>
</dbReference>
<dbReference type="ProteomicsDB" id="273246">
    <molecule id="Q60819-3"/>
</dbReference>
<dbReference type="ProteomicsDB" id="273247">
    <molecule id="Q60819-4"/>
</dbReference>
<dbReference type="ProteomicsDB" id="273248">
    <molecule id="Q60819-5"/>
</dbReference>
<dbReference type="ProteomicsDB" id="273249">
    <molecule id="Q60819-6"/>
</dbReference>
<dbReference type="Antibodypedia" id="24259">
    <property type="antibodies" value="491 antibodies from 36 providers"/>
</dbReference>
<dbReference type="DNASU" id="16169"/>
<dbReference type="Ensembl" id="ENSMUST00000078834.12">
    <molecule id="Q60819-1"/>
    <property type="protein sequence ID" value="ENSMUSP00000077878.6"/>
    <property type="gene ID" value="ENSMUSG00000023206.17"/>
</dbReference>
<dbReference type="Ensembl" id="ENSMUST00000114831.9">
    <molecule id="Q60819-2"/>
    <property type="protein sequence ID" value="ENSMUSP00000110480.3"/>
    <property type="gene ID" value="ENSMUSG00000023206.17"/>
</dbReference>
<dbReference type="Ensembl" id="ENSMUST00000114832.3">
    <molecule id="Q60819-6"/>
    <property type="protein sequence ID" value="ENSMUSP00000110481.3"/>
    <property type="gene ID" value="ENSMUSG00000023206.17"/>
</dbReference>
<dbReference type="Ensembl" id="ENSMUST00000114833.10">
    <molecule id="Q60819-4"/>
    <property type="protein sequence ID" value="ENSMUSP00000110482.4"/>
    <property type="gene ID" value="ENSMUSG00000023206.17"/>
</dbReference>
<dbReference type="Ensembl" id="ENSMUST00000114834.10">
    <molecule id="Q60819-3"/>
    <property type="protein sequence ID" value="ENSMUSP00000110483.4"/>
    <property type="gene ID" value="ENSMUSG00000023206.17"/>
</dbReference>
<dbReference type="Ensembl" id="ENSMUST00000128156.9">
    <molecule id="Q60819-5"/>
    <property type="protein sequence ID" value="ENSMUSP00000126364.2"/>
    <property type="gene ID" value="ENSMUSG00000023206.17"/>
</dbReference>
<dbReference type="Ensembl" id="ENSMUST00000135341.8">
    <molecule id="Q60819-5"/>
    <property type="protein sequence ID" value="ENSMUSP00000132731.3"/>
    <property type="gene ID" value="ENSMUSG00000023206.17"/>
</dbReference>
<dbReference type="Ensembl" id="ENSMUST00000138349.8">
    <molecule id="Q60819-5"/>
    <property type="protein sequence ID" value="ENSMUSP00000131473.2"/>
    <property type="gene ID" value="ENSMUSG00000023206.17"/>
</dbReference>
<dbReference type="GeneID" id="16169"/>
<dbReference type="KEGG" id="mmu:16169"/>
<dbReference type="UCSC" id="uc008iiw.2">
    <molecule id="Q60819-6"/>
    <property type="organism name" value="mouse"/>
</dbReference>
<dbReference type="UCSC" id="uc008iix.2">
    <molecule id="Q60819-1"/>
    <property type="organism name" value="mouse"/>
</dbReference>
<dbReference type="UCSC" id="uc008iiy.2">
    <molecule id="Q60819-2"/>
    <property type="organism name" value="mouse"/>
</dbReference>
<dbReference type="UCSC" id="uc008iiz.2">
    <molecule id="Q60819-3"/>
    <property type="organism name" value="mouse"/>
</dbReference>
<dbReference type="UCSC" id="uc008ija.2">
    <molecule id="Q60819-4"/>
    <property type="organism name" value="mouse"/>
</dbReference>
<dbReference type="AGR" id="MGI:104644"/>
<dbReference type="CTD" id="3601"/>
<dbReference type="MGI" id="MGI:104644">
    <property type="gene designation" value="Il15ra"/>
</dbReference>
<dbReference type="VEuPathDB" id="HostDB:ENSMUSG00000023206"/>
<dbReference type="eggNOG" id="ENOG502SG86">
    <property type="taxonomic scope" value="Eukaryota"/>
</dbReference>
<dbReference type="GeneTree" id="ENSGT00390000000121"/>
<dbReference type="HOGENOM" id="CLU_2014496_0_0_1"/>
<dbReference type="InParanoid" id="Q60819"/>
<dbReference type="OMA" id="PINCAPA"/>
<dbReference type="OrthoDB" id="9944172at2759"/>
<dbReference type="PhylomeDB" id="Q60819"/>
<dbReference type="TreeFam" id="TF338443"/>
<dbReference type="Reactome" id="R-MMU-8983432">
    <property type="pathway name" value="Interleukin-15 signaling"/>
</dbReference>
<dbReference type="BioGRID-ORCS" id="16169">
    <property type="hits" value="2 hits in 76 CRISPR screens"/>
</dbReference>
<dbReference type="ChiTaRS" id="Il15ra">
    <property type="organism name" value="mouse"/>
</dbReference>
<dbReference type="EvolutionaryTrace" id="Q60819"/>
<dbReference type="PRO" id="PR:Q60819"/>
<dbReference type="Proteomes" id="UP000000589">
    <property type="component" value="Chromosome 2"/>
</dbReference>
<dbReference type="RNAct" id="Q60819">
    <property type="molecule type" value="protein"/>
</dbReference>
<dbReference type="Bgee" id="ENSMUSG00000023206">
    <property type="expression patterns" value="Expressed in hindlimb stylopod muscle and 156 other cell types or tissues"/>
</dbReference>
<dbReference type="ExpressionAtlas" id="Q60819">
    <property type="expression patterns" value="baseline and differential"/>
</dbReference>
<dbReference type="GO" id="GO:0009986">
    <property type="term" value="C:cell surface"/>
    <property type="evidence" value="ECO:0000250"/>
    <property type="project" value="UniProtKB"/>
</dbReference>
<dbReference type="GO" id="GO:0031410">
    <property type="term" value="C:cytoplasmic vesicle"/>
    <property type="evidence" value="ECO:0000314"/>
    <property type="project" value="MGI"/>
</dbReference>
<dbReference type="GO" id="GO:0005829">
    <property type="term" value="C:cytosol"/>
    <property type="evidence" value="ECO:0007669"/>
    <property type="project" value="Ensembl"/>
</dbReference>
<dbReference type="GO" id="GO:0005576">
    <property type="term" value="C:extracellular region"/>
    <property type="evidence" value="ECO:0007669"/>
    <property type="project" value="UniProtKB-SubCell"/>
</dbReference>
<dbReference type="GO" id="GO:0031965">
    <property type="term" value="C:nuclear membrane"/>
    <property type="evidence" value="ECO:0007669"/>
    <property type="project" value="UniProtKB-SubCell"/>
</dbReference>
<dbReference type="GO" id="GO:0005886">
    <property type="term" value="C:plasma membrane"/>
    <property type="evidence" value="ECO:0000314"/>
    <property type="project" value="MGI"/>
</dbReference>
<dbReference type="GO" id="GO:0042010">
    <property type="term" value="F:interleukin-15 receptor activity"/>
    <property type="evidence" value="ECO:0000250"/>
    <property type="project" value="UniProtKB"/>
</dbReference>
<dbReference type="GO" id="GO:0019901">
    <property type="term" value="F:protein kinase binding"/>
    <property type="evidence" value="ECO:0007669"/>
    <property type="project" value="Ensembl"/>
</dbReference>
<dbReference type="GO" id="GO:0007259">
    <property type="term" value="P:cell surface receptor signaling pathway via JAK-STAT"/>
    <property type="evidence" value="ECO:0007669"/>
    <property type="project" value="Ensembl"/>
</dbReference>
<dbReference type="GO" id="GO:0001779">
    <property type="term" value="P:natural killer cell differentiation"/>
    <property type="evidence" value="ECO:0000315"/>
    <property type="project" value="MGI"/>
</dbReference>
<dbReference type="GO" id="GO:0010977">
    <property type="term" value="P:negative regulation of neuron projection development"/>
    <property type="evidence" value="ECO:0007669"/>
    <property type="project" value="Ensembl"/>
</dbReference>
<dbReference type="GO" id="GO:0032825">
    <property type="term" value="P:positive regulation of natural killer cell differentiation"/>
    <property type="evidence" value="ECO:0000315"/>
    <property type="project" value="MGI"/>
</dbReference>
<dbReference type="GO" id="GO:0050766">
    <property type="term" value="P:positive regulation of phagocytosis"/>
    <property type="evidence" value="ECO:0000250"/>
    <property type="project" value="UniProtKB"/>
</dbReference>
<dbReference type="GO" id="GO:0031667">
    <property type="term" value="P:response to nutrient levels"/>
    <property type="evidence" value="ECO:0007669"/>
    <property type="project" value="Ensembl"/>
</dbReference>
<dbReference type="CDD" id="cd00033">
    <property type="entry name" value="CCP"/>
    <property type="match status" value="1"/>
</dbReference>
<dbReference type="FunFam" id="2.20.28.230:FF:000001">
    <property type="entry name" value="Interleukin 15 receptor subunit alpha"/>
    <property type="match status" value="1"/>
</dbReference>
<dbReference type="Gene3D" id="2.20.28.230">
    <property type="match status" value="1"/>
</dbReference>
<dbReference type="InterPro" id="IPR042372">
    <property type="entry name" value="IL15RA"/>
</dbReference>
<dbReference type="InterPro" id="IPR035976">
    <property type="entry name" value="Sushi/SCR/CCP_sf"/>
</dbReference>
<dbReference type="InterPro" id="IPR000436">
    <property type="entry name" value="Sushi_SCR_CCP_dom"/>
</dbReference>
<dbReference type="PANTHER" id="PTHR15060">
    <property type="entry name" value="INTERLEUKIN-15 RECEPTOR SUBUNIT ALPHA"/>
    <property type="match status" value="1"/>
</dbReference>
<dbReference type="PANTHER" id="PTHR15060:SF0">
    <property type="entry name" value="INTERLEUKIN-15 RECEPTOR SUBUNIT ALPHA"/>
    <property type="match status" value="1"/>
</dbReference>
<dbReference type="Pfam" id="PF00084">
    <property type="entry name" value="Sushi"/>
    <property type="match status" value="1"/>
</dbReference>
<dbReference type="SMART" id="SM00032">
    <property type="entry name" value="CCP"/>
    <property type="match status" value="1"/>
</dbReference>
<dbReference type="SUPFAM" id="SSF57535">
    <property type="entry name" value="Complement control module/SCR domain"/>
    <property type="match status" value="1"/>
</dbReference>
<dbReference type="PROSITE" id="PS50923">
    <property type="entry name" value="SUSHI"/>
    <property type="match status" value="1"/>
</dbReference>
<protein>
    <recommendedName>
        <fullName>Interleukin-15 receptor subunit alpha</fullName>
        <shortName>IL-15 receptor subunit alpha</shortName>
        <shortName>IL-15R-alpha</shortName>
        <shortName>IL-15RA</shortName>
    </recommendedName>
    <cdAntigenName>CD215</cdAntigenName>
    <component>
        <recommendedName>
            <fullName>Soluble interleukin-15 receptor subunit alpha</fullName>
            <shortName>sIL-15 receptor subunit alpha</shortName>
            <shortName>sIL-15R-alpha</shortName>
            <shortName>sIL-15RA</shortName>
        </recommendedName>
    </component>
</protein>
<gene>
    <name type="primary">Il15ra</name>
</gene>
<comment type="function">
    <text evidence="2 8">High-affinity receptor for interleukin-15 (PubMed:17947230). Can signal both in cis and trans where IL15R from one subset of cells presents IL15 to neighboring IL2RG-expressing cells (PubMed:17947230). In neutrophils, binds and activates kinase SYK in response to IL15 stimulation (By similarity). In neutrophils, required for IL15-induced phagocytosis in a SYK-dependent manner (By similarity).</text>
</comment>
<comment type="subunit">
    <text evidence="2">The interleukin-15 receptor IL15R is a heterotrimer of IL15RA, IL2RB and IL2RG. IL15RA also self-associates (By similarity). Interacts with SYK (By similarity).</text>
</comment>
<comment type="subcellular location">
    <subcellularLocation>
        <location evidence="2">Membrane</location>
        <topology evidence="2">Single-pass type I membrane protein</topology>
    </subcellularLocation>
    <subcellularLocation>
        <location evidence="2">Nucleus membrane</location>
        <topology evidence="2">Single-pass type I membrane protein</topology>
    </subcellularLocation>
    <subcellularLocation>
        <location evidence="2">Cell surface</location>
    </subcellularLocation>
</comment>
<comment type="subcellular location">
    <molecule>Soluble interleukin-15 receptor subunit alpha</molecule>
    <subcellularLocation>
        <location evidence="1">Secreted</location>
        <location evidence="1">Extracellular space</location>
    </subcellularLocation>
</comment>
<comment type="alternative products">
    <event type="alternative splicing"/>
    <isoform>
        <id>Q60819-1</id>
        <name>1</name>
        <sequence type="displayed"/>
    </isoform>
    <isoform>
        <id>Q60819-2</id>
        <name>2</name>
        <name>1A</name>
        <sequence type="described" ref="VSP_012629 VSP_012630"/>
    </isoform>
    <isoform>
        <id>Q60819-3</id>
        <name>3</name>
        <name>1B</name>
        <name>IL-15R-alphadelta4</name>
        <sequence type="described" ref="VSP_012629 VSP_012630 VSP_012631"/>
    </isoform>
    <isoform>
        <id>Q60819-4</id>
        <name>4</name>
        <name>1C</name>
        <name>IL-15R-alphadelta34</name>
        <sequence type="described" ref="VSP_012628 VSP_012629 VSP_012630 VSP_012631 VSP_012632"/>
    </isoform>
    <isoform>
        <id>Q60819-5</id>
        <name>5</name>
        <name>2</name>
        <name>2A</name>
        <sequence type="described" ref="VSP_012627 VSP_012628 VSP_012629"/>
    </isoform>
    <isoform>
        <id>Q60819-6</id>
        <name>6</name>
        <name>IL-15R-alphadelta345</name>
        <sequence type="described" ref="VSP_012628 VSP_012629 VSP_012630 VSP_012631 VSP_012633"/>
    </isoform>
</comment>
<comment type="tissue specificity">
    <text evidence="6 9">Widely expressed.</text>
</comment>
<comment type="PTM">
    <text evidence="2">N-glycosylated and O-glycosylated.</text>
</comment>
<comment type="PTM">
    <text evidence="2">A soluble form (sIL-15RA) arises from proteolytic shedding of the membrane-anchored receptor (By similarity). It also binds IL15 and thus interferes with IL15 binding to the membrane receptor (By similarity).</text>
</comment>
<comment type="caution">
    <text evidence="7 13">It was shown that proteolytic cleavage of Il15ra involves ADAM17/TACE; this publication has later been retracted.</text>
</comment>
<sequence>MASPQLRGYGVQAIPVLLLLLLLLLLPLRVTPGTTCPPPVSIEHADIRVKNYSVNSRERYVCNSGFKRKAGTSTLIECVINKNTNVAHWTTPSLKCIRDPSLAHYSPVPTVVTPKVTSQPESPSPSAKEPEAFSPKSDTAMTTETAIMPGSRLTPSQTTSAGTTGTGSHKSSRAPSLAATMTLEPTASTSLRITEISPHSSKMTKVAISTSVLLVGAGVVMAFLAWYIKSRQPSQPCRVEVETMETVPMTVRASSKEDEDTGA</sequence>